<comment type="function">
    <text>The keratin products of mammalian epidermal derivatives such as wool and hair consist of microfibrils embedded in a rigid matrix of other proteins. The matrix proteins include the high-sulfur and high-tyrosine keratins, having molecular weights of 6-20 kDa, whereas the microfibrils contain the larger, low-sulfur keratins (40-56 kDa).</text>
</comment>
<comment type="miscellaneous">
    <text>The source of this keratin is lincoln wool.</text>
</comment>
<feature type="initiator methionine" description="Removed" evidence="1">
    <location>
        <position position="1"/>
    </location>
</feature>
<feature type="chain" id="PRO_0000084326" description="Keratin, high-sulfur matrix protein, B2C">
    <location>
        <begin position="2"/>
        <end position="152"/>
    </location>
</feature>
<feature type="repeat">
    <location>
        <begin position="27"/>
        <end position="36"/>
    </location>
</feature>
<feature type="repeat">
    <location>
        <begin position="37"/>
        <end position="46"/>
    </location>
</feature>
<feature type="repeat">
    <location>
        <begin position="47"/>
        <end position="56"/>
    </location>
</feature>
<feature type="modified residue" description="N-acetylalanine" evidence="1">
    <location>
        <position position="2"/>
    </location>
</feature>
<evidence type="ECO:0000269" key="1">
    <source>
    </source>
</evidence>
<organism>
    <name type="scientific">Ovis aries</name>
    <name type="common">Sheep</name>
    <dbReference type="NCBI Taxonomy" id="9940"/>
    <lineage>
        <taxon>Eukaryota</taxon>
        <taxon>Metazoa</taxon>
        <taxon>Chordata</taxon>
        <taxon>Craniata</taxon>
        <taxon>Vertebrata</taxon>
        <taxon>Euteleostomi</taxon>
        <taxon>Mammalia</taxon>
        <taxon>Eutheria</taxon>
        <taxon>Laurasiatheria</taxon>
        <taxon>Artiodactyla</taxon>
        <taxon>Ruminantia</taxon>
        <taxon>Pecora</taxon>
        <taxon>Bovidae</taxon>
        <taxon>Caprinae</taxon>
        <taxon>Ovis</taxon>
    </lineage>
</organism>
<keyword id="KW-0007">Acetylation</keyword>
<keyword id="KW-0903">Direct protein sequencing</keyword>
<keyword id="KW-0416">Keratin</keyword>
<keyword id="KW-1185">Reference proteome</keyword>
<keyword id="KW-0677">Repeat</keyword>
<dbReference type="EMBL" id="X02925">
    <property type="protein sequence ID" value="CAA26681.1"/>
    <property type="molecule type" value="Genomic_DNA"/>
</dbReference>
<dbReference type="PIR" id="S07349">
    <property type="entry name" value="KRSHHC"/>
</dbReference>
<dbReference type="iPTMnet" id="P02440"/>
<dbReference type="Proteomes" id="UP000002356">
    <property type="component" value="Unplaced"/>
</dbReference>
<dbReference type="GO" id="GO:0005829">
    <property type="term" value="C:cytosol"/>
    <property type="evidence" value="ECO:0007669"/>
    <property type="project" value="UniProtKB-ARBA"/>
</dbReference>
<dbReference type="GO" id="GO:0045095">
    <property type="term" value="C:keratin filament"/>
    <property type="evidence" value="ECO:0007669"/>
    <property type="project" value="InterPro"/>
</dbReference>
<dbReference type="InterPro" id="IPR002494">
    <property type="entry name" value="KAP"/>
</dbReference>
<dbReference type="Pfam" id="PF01500">
    <property type="entry name" value="Keratin_B2"/>
    <property type="match status" value="1"/>
</dbReference>
<accession>P02440</accession>
<reference key="1">
    <citation type="journal article" date="1983" name="Nucleic Acids Res.">
        <title>Mammalian keratin gene families: organisation of genes coding for the B2 high-sulphur proteins of sheep wool.</title>
        <authorList>
            <person name="Powell B.C."/>
            <person name="Sleigh M.J."/>
            <person name="Ward K.A."/>
            <person name="Rogers G.E."/>
        </authorList>
    </citation>
    <scope>NUCLEOTIDE SEQUENCE [GENOMIC DNA]</scope>
</reference>
<reference key="2">
    <citation type="journal article" date="1971" name="Nature New Biol.">
        <title>Amino-acid sequence of a high-sulphur protein from wool.</title>
        <authorList>
            <person name="Elleman T.C."/>
        </authorList>
    </citation>
    <scope>PROTEIN SEQUENCE OF 2-152</scope>
    <scope>ACETYLATION AT ALA-2</scope>
</reference>
<proteinExistence type="evidence at protein level"/>
<protein>
    <recommendedName>
        <fullName>Keratin, high-sulfur matrix protein, B2C</fullName>
    </recommendedName>
</protein>
<name>KRB2C_SHEEP</name>
<sequence>MACCSTSFCGFPICSTAGTCGSSCCRSTCSQTSCCQPTSIQTSCCQPTCLQTSGCETGCGIGGSTGYGQVGSSGAVSSRTRWCRPDCRVEGTSLPPCCVVSCTSPSCCQLYYAQASCCRPSYCGQSCCRPACCCQPTCTEPVCEPTCSQPIC</sequence>